<proteinExistence type="inferred from homology"/>
<dbReference type="EMBL" id="BX640437">
    <property type="protein sequence ID" value="CAE30548.1"/>
    <property type="molecule type" value="Genomic_DNA"/>
</dbReference>
<dbReference type="RefSeq" id="WP_003806921.1">
    <property type="nucleotide sequence ID" value="NC_002927.3"/>
</dbReference>
<dbReference type="SMR" id="Q7WRA8"/>
<dbReference type="GeneID" id="93206276"/>
<dbReference type="KEGG" id="bbr:BB0046"/>
<dbReference type="eggNOG" id="COG0097">
    <property type="taxonomic scope" value="Bacteria"/>
</dbReference>
<dbReference type="HOGENOM" id="CLU_065464_1_2_4"/>
<dbReference type="Proteomes" id="UP000001027">
    <property type="component" value="Chromosome"/>
</dbReference>
<dbReference type="GO" id="GO:0022625">
    <property type="term" value="C:cytosolic large ribosomal subunit"/>
    <property type="evidence" value="ECO:0007669"/>
    <property type="project" value="TreeGrafter"/>
</dbReference>
<dbReference type="GO" id="GO:0019843">
    <property type="term" value="F:rRNA binding"/>
    <property type="evidence" value="ECO:0007669"/>
    <property type="project" value="UniProtKB-UniRule"/>
</dbReference>
<dbReference type="GO" id="GO:0003735">
    <property type="term" value="F:structural constituent of ribosome"/>
    <property type="evidence" value="ECO:0007669"/>
    <property type="project" value="InterPro"/>
</dbReference>
<dbReference type="GO" id="GO:0002181">
    <property type="term" value="P:cytoplasmic translation"/>
    <property type="evidence" value="ECO:0007669"/>
    <property type="project" value="TreeGrafter"/>
</dbReference>
<dbReference type="FunFam" id="3.90.930.12:FF:000001">
    <property type="entry name" value="50S ribosomal protein L6"/>
    <property type="match status" value="1"/>
</dbReference>
<dbReference type="FunFam" id="3.90.930.12:FF:000002">
    <property type="entry name" value="50S ribosomal protein L6"/>
    <property type="match status" value="1"/>
</dbReference>
<dbReference type="Gene3D" id="3.90.930.12">
    <property type="entry name" value="Ribosomal protein L6, alpha-beta domain"/>
    <property type="match status" value="2"/>
</dbReference>
<dbReference type="HAMAP" id="MF_01365_B">
    <property type="entry name" value="Ribosomal_uL6_B"/>
    <property type="match status" value="1"/>
</dbReference>
<dbReference type="InterPro" id="IPR000702">
    <property type="entry name" value="Ribosomal_uL6-like"/>
</dbReference>
<dbReference type="InterPro" id="IPR036789">
    <property type="entry name" value="Ribosomal_uL6-like_a/b-dom_sf"/>
</dbReference>
<dbReference type="InterPro" id="IPR020040">
    <property type="entry name" value="Ribosomal_uL6_a/b-dom"/>
</dbReference>
<dbReference type="InterPro" id="IPR019906">
    <property type="entry name" value="Ribosomal_uL6_bac-type"/>
</dbReference>
<dbReference type="InterPro" id="IPR002358">
    <property type="entry name" value="Ribosomal_uL6_CS"/>
</dbReference>
<dbReference type="NCBIfam" id="TIGR03654">
    <property type="entry name" value="L6_bact"/>
    <property type="match status" value="1"/>
</dbReference>
<dbReference type="PANTHER" id="PTHR11655">
    <property type="entry name" value="60S/50S RIBOSOMAL PROTEIN L6/L9"/>
    <property type="match status" value="1"/>
</dbReference>
<dbReference type="PANTHER" id="PTHR11655:SF14">
    <property type="entry name" value="LARGE RIBOSOMAL SUBUNIT PROTEIN UL6M"/>
    <property type="match status" value="1"/>
</dbReference>
<dbReference type="Pfam" id="PF00347">
    <property type="entry name" value="Ribosomal_L6"/>
    <property type="match status" value="2"/>
</dbReference>
<dbReference type="PIRSF" id="PIRSF002162">
    <property type="entry name" value="Ribosomal_L6"/>
    <property type="match status" value="1"/>
</dbReference>
<dbReference type="PRINTS" id="PR00059">
    <property type="entry name" value="RIBOSOMALL6"/>
</dbReference>
<dbReference type="SUPFAM" id="SSF56053">
    <property type="entry name" value="Ribosomal protein L6"/>
    <property type="match status" value="2"/>
</dbReference>
<dbReference type="PROSITE" id="PS00525">
    <property type="entry name" value="RIBOSOMAL_L6_1"/>
    <property type="match status" value="1"/>
</dbReference>
<gene>
    <name evidence="1" type="primary">rplF</name>
    <name type="ordered locus">BB0046</name>
</gene>
<sequence length="177" mass="19160">MSRIAKYPVELPKGVEASIQPDQITVKGPLGTLVQSLTGDVNVAQEDGKLTFVVANDSRHANAMSGTLRALVANMVTGVSKGFERKLNLVGVGYRAQIQGDAVKLQLGFSHDVVHQLPAGVKAECPTQTEIVIKGPNKQVVGQVAAEIRKYREPEPYKGKGVRYADERVVIKETKKK</sequence>
<keyword id="KW-0687">Ribonucleoprotein</keyword>
<keyword id="KW-0689">Ribosomal protein</keyword>
<keyword id="KW-0694">RNA-binding</keyword>
<keyword id="KW-0699">rRNA-binding</keyword>
<evidence type="ECO:0000255" key="1">
    <source>
        <dbReference type="HAMAP-Rule" id="MF_01365"/>
    </source>
</evidence>
<evidence type="ECO:0000305" key="2"/>
<name>RL6_BORBR</name>
<feature type="chain" id="PRO_0000265221" description="Large ribosomal subunit protein uL6">
    <location>
        <begin position="1"/>
        <end position="177"/>
    </location>
</feature>
<comment type="function">
    <text evidence="1">This protein binds to the 23S rRNA, and is important in its secondary structure. It is located near the subunit interface in the base of the L7/L12 stalk, and near the tRNA binding site of the peptidyltransferase center.</text>
</comment>
<comment type="subunit">
    <text evidence="1">Part of the 50S ribosomal subunit.</text>
</comment>
<comment type="similarity">
    <text evidence="1">Belongs to the universal ribosomal protein uL6 family.</text>
</comment>
<protein>
    <recommendedName>
        <fullName evidence="1">Large ribosomal subunit protein uL6</fullName>
    </recommendedName>
    <alternativeName>
        <fullName evidence="2">50S ribosomal protein L6</fullName>
    </alternativeName>
</protein>
<reference key="1">
    <citation type="journal article" date="2003" name="Nat. Genet.">
        <title>Comparative analysis of the genome sequences of Bordetella pertussis, Bordetella parapertussis and Bordetella bronchiseptica.</title>
        <authorList>
            <person name="Parkhill J."/>
            <person name="Sebaihia M."/>
            <person name="Preston A."/>
            <person name="Murphy L.D."/>
            <person name="Thomson N.R."/>
            <person name="Harris D.E."/>
            <person name="Holden M.T.G."/>
            <person name="Churcher C.M."/>
            <person name="Bentley S.D."/>
            <person name="Mungall K.L."/>
            <person name="Cerdeno-Tarraga A.-M."/>
            <person name="Temple L."/>
            <person name="James K.D."/>
            <person name="Harris B."/>
            <person name="Quail M.A."/>
            <person name="Achtman M."/>
            <person name="Atkin R."/>
            <person name="Baker S."/>
            <person name="Basham D."/>
            <person name="Bason N."/>
            <person name="Cherevach I."/>
            <person name="Chillingworth T."/>
            <person name="Collins M."/>
            <person name="Cronin A."/>
            <person name="Davis P."/>
            <person name="Doggett J."/>
            <person name="Feltwell T."/>
            <person name="Goble A."/>
            <person name="Hamlin N."/>
            <person name="Hauser H."/>
            <person name="Holroyd S."/>
            <person name="Jagels K."/>
            <person name="Leather S."/>
            <person name="Moule S."/>
            <person name="Norberczak H."/>
            <person name="O'Neil S."/>
            <person name="Ormond D."/>
            <person name="Price C."/>
            <person name="Rabbinowitsch E."/>
            <person name="Rutter S."/>
            <person name="Sanders M."/>
            <person name="Saunders D."/>
            <person name="Seeger K."/>
            <person name="Sharp S."/>
            <person name="Simmonds M."/>
            <person name="Skelton J."/>
            <person name="Squares R."/>
            <person name="Squares S."/>
            <person name="Stevens K."/>
            <person name="Unwin L."/>
            <person name="Whitehead S."/>
            <person name="Barrell B.G."/>
            <person name="Maskell D.J."/>
        </authorList>
    </citation>
    <scope>NUCLEOTIDE SEQUENCE [LARGE SCALE GENOMIC DNA]</scope>
    <source>
        <strain>ATCC BAA-588 / NCTC 13252 / RB50</strain>
    </source>
</reference>
<organism>
    <name type="scientific">Bordetella bronchiseptica (strain ATCC BAA-588 / NCTC 13252 / RB50)</name>
    <name type="common">Alcaligenes bronchisepticus</name>
    <dbReference type="NCBI Taxonomy" id="257310"/>
    <lineage>
        <taxon>Bacteria</taxon>
        <taxon>Pseudomonadati</taxon>
        <taxon>Pseudomonadota</taxon>
        <taxon>Betaproteobacteria</taxon>
        <taxon>Burkholderiales</taxon>
        <taxon>Alcaligenaceae</taxon>
        <taxon>Bordetella</taxon>
    </lineage>
</organism>
<accession>Q7WRA8</accession>